<dbReference type="EC" id="2.6.1.52" evidence="1"/>
<dbReference type="EMBL" id="Y10355">
    <property type="protein sequence ID" value="CAA71381.1"/>
    <property type="molecule type" value="Genomic_DNA"/>
</dbReference>
<dbReference type="EMBL" id="AE006468">
    <property type="protein sequence ID" value="AAL19911.1"/>
    <property type="molecule type" value="Genomic_DNA"/>
</dbReference>
<dbReference type="RefSeq" id="NP_459952.1">
    <property type="nucleotide sequence ID" value="NC_003197.2"/>
</dbReference>
<dbReference type="RefSeq" id="WP_000079584.1">
    <property type="nucleotide sequence ID" value="NC_003197.2"/>
</dbReference>
<dbReference type="PDB" id="3QM2">
    <property type="method" value="X-ray"/>
    <property type="resolution" value="2.25 A"/>
    <property type="chains" value="A/B=1-362"/>
</dbReference>
<dbReference type="PDBsum" id="3QM2"/>
<dbReference type="SMR" id="P55900"/>
<dbReference type="STRING" id="99287.STM0977"/>
<dbReference type="PaxDb" id="99287-STM0977"/>
<dbReference type="GeneID" id="1252495"/>
<dbReference type="KEGG" id="stm:STM0977"/>
<dbReference type="PATRIC" id="fig|99287.12.peg.1030"/>
<dbReference type="HOGENOM" id="CLU_034866_0_2_6"/>
<dbReference type="OMA" id="AFVYFCD"/>
<dbReference type="PhylomeDB" id="P55900"/>
<dbReference type="BioCyc" id="SENT99287:STM0977-MONOMER"/>
<dbReference type="UniPathway" id="UPA00135">
    <property type="reaction ID" value="UER00197"/>
</dbReference>
<dbReference type="UniPathway" id="UPA00244">
    <property type="reaction ID" value="UER00311"/>
</dbReference>
<dbReference type="EvolutionaryTrace" id="P55900"/>
<dbReference type="Proteomes" id="UP000001014">
    <property type="component" value="Chromosome"/>
</dbReference>
<dbReference type="GO" id="GO:0005737">
    <property type="term" value="C:cytoplasm"/>
    <property type="evidence" value="ECO:0000318"/>
    <property type="project" value="GO_Central"/>
</dbReference>
<dbReference type="GO" id="GO:0004648">
    <property type="term" value="F:O-phospho-L-serine:2-oxoglutarate aminotransferase activity"/>
    <property type="evidence" value="ECO:0000318"/>
    <property type="project" value="GO_Central"/>
</dbReference>
<dbReference type="GO" id="GO:0030170">
    <property type="term" value="F:pyridoxal phosphate binding"/>
    <property type="evidence" value="ECO:0000318"/>
    <property type="project" value="GO_Central"/>
</dbReference>
<dbReference type="GO" id="GO:0006564">
    <property type="term" value="P:L-serine biosynthetic process"/>
    <property type="evidence" value="ECO:0000318"/>
    <property type="project" value="GO_Central"/>
</dbReference>
<dbReference type="GO" id="GO:0008615">
    <property type="term" value="P:pyridoxine biosynthetic process"/>
    <property type="evidence" value="ECO:0007669"/>
    <property type="project" value="UniProtKB-UniRule"/>
</dbReference>
<dbReference type="CDD" id="cd00611">
    <property type="entry name" value="PSAT_like"/>
    <property type="match status" value="1"/>
</dbReference>
<dbReference type="FunFam" id="3.40.640.10:FF:000010">
    <property type="entry name" value="Phosphoserine aminotransferase"/>
    <property type="match status" value="1"/>
</dbReference>
<dbReference type="FunFam" id="3.90.1150.10:FF:000006">
    <property type="entry name" value="Phosphoserine aminotransferase"/>
    <property type="match status" value="1"/>
</dbReference>
<dbReference type="Gene3D" id="3.90.1150.10">
    <property type="entry name" value="Aspartate Aminotransferase, domain 1"/>
    <property type="match status" value="1"/>
</dbReference>
<dbReference type="Gene3D" id="3.40.640.10">
    <property type="entry name" value="Type I PLP-dependent aspartate aminotransferase-like (Major domain)"/>
    <property type="match status" value="1"/>
</dbReference>
<dbReference type="HAMAP" id="MF_00160">
    <property type="entry name" value="SerC_aminotrans_5"/>
    <property type="match status" value="1"/>
</dbReference>
<dbReference type="InterPro" id="IPR000192">
    <property type="entry name" value="Aminotrans_V_dom"/>
</dbReference>
<dbReference type="InterPro" id="IPR020578">
    <property type="entry name" value="Aminotrans_V_PyrdxlP_BS"/>
</dbReference>
<dbReference type="InterPro" id="IPR022278">
    <property type="entry name" value="Pser_aminoTfrase"/>
</dbReference>
<dbReference type="InterPro" id="IPR015424">
    <property type="entry name" value="PyrdxlP-dep_Trfase"/>
</dbReference>
<dbReference type="InterPro" id="IPR015421">
    <property type="entry name" value="PyrdxlP-dep_Trfase_major"/>
</dbReference>
<dbReference type="InterPro" id="IPR015422">
    <property type="entry name" value="PyrdxlP-dep_Trfase_small"/>
</dbReference>
<dbReference type="NCBIfam" id="NF003764">
    <property type="entry name" value="PRK05355.1"/>
    <property type="match status" value="1"/>
</dbReference>
<dbReference type="NCBIfam" id="TIGR01364">
    <property type="entry name" value="serC_1"/>
    <property type="match status" value="1"/>
</dbReference>
<dbReference type="PANTHER" id="PTHR43247">
    <property type="entry name" value="PHOSPHOSERINE AMINOTRANSFERASE"/>
    <property type="match status" value="1"/>
</dbReference>
<dbReference type="PANTHER" id="PTHR43247:SF1">
    <property type="entry name" value="PHOSPHOSERINE AMINOTRANSFERASE"/>
    <property type="match status" value="1"/>
</dbReference>
<dbReference type="Pfam" id="PF00266">
    <property type="entry name" value="Aminotran_5"/>
    <property type="match status" value="1"/>
</dbReference>
<dbReference type="PIRSF" id="PIRSF000525">
    <property type="entry name" value="SerC"/>
    <property type="match status" value="1"/>
</dbReference>
<dbReference type="SUPFAM" id="SSF53383">
    <property type="entry name" value="PLP-dependent transferases"/>
    <property type="match status" value="1"/>
</dbReference>
<dbReference type="PROSITE" id="PS00595">
    <property type="entry name" value="AA_TRANSFER_CLASS_5"/>
    <property type="match status" value="1"/>
</dbReference>
<feature type="chain" id="PRO_0000150207" description="Phosphoserine aminotransferase">
    <location>
        <begin position="1"/>
        <end position="362"/>
    </location>
</feature>
<feature type="binding site" evidence="1">
    <location>
        <position position="9"/>
    </location>
    <ligand>
        <name>L-glutamate</name>
        <dbReference type="ChEBI" id="CHEBI:29985"/>
    </ligand>
</feature>
<feature type="binding site" evidence="1">
    <location>
        <position position="42"/>
    </location>
    <ligand>
        <name>L-glutamate</name>
        <dbReference type="ChEBI" id="CHEBI:29985"/>
    </ligand>
</feature>
<feature type="binding site" evidence="1">
    <location>
        <begin position="76"/>
        <end position="77"/>
    </location>
    <ligand>
        <name>pyridoxal 5'-phosphate</name>
        <dbReference type="ChEBI" id="CHEBI:597326"/>
    </ligand>
</feature>
<feature type="binding site" evidence="1">
    <location>
        <position position="102"/>
    </location>
    <ligand>
        <name>pyridoxal 5'-phosphate</name>
        <dbReference type="ChEBI" id="CHEBI:597326"/>
    </ligand>
</feature>
<feature type="binding site" evidence="1">
    <location>
        <position position="153"/>
    </location>
    <ligand>
        <name>pyridoxal 5'-phosphate</name>
        <dbReference type="ChEBI" id="CHEBI:597326"/>
    </ligand>
</feature>
<feature type="binding site" evidence="1">
    <location>
        <position position="174"/>
    </location>
    <ligand>
        <name>pyridoxal 5'-phosphate</name>
        <dbReference type="ChEBI" id="CHEBI:597326"/>
    </ligand>
</feature>
<feature type="binding site" evidence="1">
    <location>
        <position position="197"/>
    </location>
    <ligand>
        <name>pyridoxal 5'-phosphate</name>
        <dbReference type="ChEBI" id="CHEBI:597326"/>
    </ligand>
</feature>
<feature type="binding site" evidence="1">
    <location>
        <begin position="239"/>
        <end position="240"/>
    </location>
    <ligand>
        <name>pyridoxal 5'-phosphate</name>
        <dbReference type="ChEBI" id="CHEBI:597326"/>
    </ligand>
</feature>
<feature type="modified residue" description="N6-(pyridoxal phosphate)lysine" evidence="1">
    <location>
        <position position="198"/>
    </location>
</feature>
<feature type="sequence conflict" description="In Ref. 1; CAA71381." evidence="2" ref="1">
    <original>I</original>
    <variation>M</variation>
    <location>
        <position position="47"/>
    </location>
</feature>
<feature type="sequence conflict" description="In Ref. 1; CAA71381." evidence="2" ref="1">
    <original>Q</original>
    <variation>T</variation>
    <location>
        <position position="79"/>
    </location>
</feature>
<feature type="strand" evidence="3">
    <location>
        <begin position="9"/>
        <end position="11"/>
    </location>
</feature>
<feature type="helix" evidence="3">
    <location>
        <begin position="16"/>
        <end position="22"/>
    </location>
</feature>
<feature type="helix" evidence="3">
    <location>
        <begin position="51"/>
        <end position="61"/>
    </location>
</feature>
<feature type="strand" evidence="3">
    <location>
        <begin position="67"/>
        <end position="74"/>
    </location>
</feature>
<feature type="helix" evidence="3">
    <location>
        <begin position="78"/>
        <end position="87"/>
    </location>
</feature>
<feature type="strand" evidence="3">
    <location>
        <begin position="93"/>
        <end position="100"/>
    </location>
</feature>
<feature type="helix" evidence="3">
    <location>
        <begin position="101"/>
        <end position="110"/>
    </location>
</feature>
<feature type="turn" evidence="3">
    <location>
        <begin position="111"/>
        <end position="113"/>
    </location>
</feature>
<feature type="strand" evidence="3">
    <location>
        <begin position="114"/>
        <end position="120"/>
    </location>
</feature>
<feature type="strand" evidence="3">
    <location>
        <begin position="122"/>
        <end position="125"/>
    </location>
</feature>
<feature type="strand" evidence="3">
    <location>
        <begin position="128"/>
        <end position="131"/>
    </location>
</feature>
<feature type="helix" evidence="3">
    <location>
        <begin position="134"/>
        <end position="136"/>
    </location>
</feature>
<feature type="strand" evidence="3">
    <location>
        <begin position="146"/>
        <end position="148"/>
    </location>
</feature>
<feature type="strand" evidence="3">
    <location>
        <begin position="150"/>
        <end position="152"/>
    </location>
</feature>
<feature type="turn" evidence="3">
    <location>
        <begin position="153"/>
        <end position="156"/>
    </location>
</feature>
<feature type="strand" evidence="3">
    <location>
        <begin position="171"/>
        <end position="174"/>
    </location>
</feature>
<feature type="turn" evidence="3">
    <location>
        <begin position="176"/>
        <end position="180"/>
    </location>
</feature>
<feature type="helix" evidence="3">
    <location>
        <begin position="186"/>
        <end position="188"/>
    </location>
</feature>
<feature type="strand" evidence="3">
    <location>
        <begin position="190"/>
        <end position="195"/>
    </location>
</feature>
<feature type="turn" evidence="3">
    <location>
        <begin position="196"/>
        <end position="200"/>
    </location>
</feature>
<feature type="strand" evidence="3">
    <location>
        <begin position="205"/>
        <end position="211"/>
    </location>
</feature>
<feature type="helix" evidence="3">
    <location>
        <begin position="212"/>
        <end position="214"/>
    </location>
</feature>
<feature type="helix" evidence="3">
    <location>
        <begin position="224"/>
        <end position="226"/>
    </location>
</feature>
<feature type="helix" evidence="3">
    <location>
        <begin position="228"/>
        <end position="233"/>
    </location>
</feature>
<feature type="helix" evidence="3">
    <location>
        <begin position="245"/>
        <end position="258"/>
    </location>
</feature>
<feature type="helix" evidence="3">
    <location>
        <begin position="261"/>
        <end position="281"/>
    </location>
</feature>
<feature type="strand" evidence="3">
    <location>
        <begin position="284"/>
        <end position="287"/>
    </location>
</feature>
<feature type="helix" evidence="3">
    <location>
        <begin position="292"/>
        <end position="294"/>
    </location>
</feature>
<feature type="strand" evidence="3">
    <location>
        <begin position="297"/>
        <end position="306"/>
    </location>
</feature>
<feature type="helix" evidence="3">
    <location>
        <begin position="307"/>
        <end position="309"/>
    </location>
</feature>
<feature type="helix" evidence="3">
    <location>
        <begin position="310"/>
        <end position="319"/>
    </location>
</feature>
<feature type="turn" evidence="3">
    <location>
        <begin position="329"/>
        <end position="331"/>
    </location>
</feature>
<feature type="strand" evidence="3">
    <location>
        <begin position="333"/>
        <end position="337"/>
    </location>
</feature>
<feature type="helix" evidence="3">
    <location>
        <begin position="344"/>
        <end position="361"/>
    </location>
</feature>
<keyword id="KW-0002">3D-structure</keyword>
<keyword id="KW-0028">Amino-acid biosynthesis</keyword>
<keyword id="KW-0032">Aminotransferase</keyword>
<keyword id="KW-0963">Cytoplasm</keyword>
<keyword id="KW-0663">Pyridoxal phosphate</keyword>
<keyword id="KW-0664">Pyridoxine biosynthesis</keyword>
<keyword id="KW-1185">Reference proteome</keyword>
<keyword id="KW-0718">Serine biosynthesis</keyword>
<keyword id="KW-0808">Transferase</keyword>
<gene>
    <name evidence="1" type="primary">serC</name>
    <name type="ordered locus">STM0977</name>
</gene>
<comment type="function">
    <text evidence="1">Catalyzes the reversible conversion of 3-phosphohydroxypyruvate to phosphoserine and of 3-hydroxy-2-oxo-4-phosphonooxybutanoate to phosphohydroxythreonine.</text>
</comment>
<comment type="catalytic activity">
    <reaction evidence="1">
        <text>O-phospho-L-serine + 2-oxoglutarate = 3-phosphooxypyruvate + L-glutamate</text>
        <dbReference type="Rhea" id="RHEA:14329"/>
        <dbReference type="ChEBI" id="CHEBI:16810"/>
        <dbReference type="ChEBI" id="CHEBI:18110"/>
        <dbReference type="ChEBI" id="CHEBI:29985"/>
        <dbReference type="ChEBI" id="CHEBI:57524"/>
        <dbReference type="EC" id="2.6.1.52"/>
    </reaction>
</comment>
<comment type="catalytic activity">
    <reaction evidence="1">
        <text>4-(phosphooxy)-L-threonine + 2-oxoglutarate = (R)-3-hydroxy-2-oxo-4-phosphooxybutanoate + L-glutamate</text>
        <dbReference type="Rhea" id="RHEA:16573"/>
        <dbReference type="ChEBI" id="CHEBI:16810"/>
        <dbReference type="ChEBI" id="CHEBI:29985"/>
        <dbReference type="ChEBI" id="CHEBI:58452"/>
        <dbReference type="ChEBI" id="CHEBI:58538"/>
        <dbReference type="EC" id="2.6.1.52"/>
    </reaction>
</comment>
<comment type="cofactor">
    <cofactor evidence="1">
        <name>pyridoxal 5'-phosphate</name>
        <dbReference type="ChEBI" id="CHEBI:597326"/>
    </cofactor>
    <text evidence="1">Binds 1 pyridoxal phosphate per subunit.</text>
</comment>
<comment type="pathway">
    <text evidence="1">Amino-acid biosynthesis; L-serine biosynthesis; L-serine from 3-phospho-D-glycerate: step 2/3.</text>
</comment>
<comment type="pathway">
    <text evidence="1">Cofactor biosynthesis; pyridoxine 5'-phosphate biosynthesis; pyridoxine 5'-phosphate from D-erythrose 4-phosphate: step 3/5.</text>
</comment>
<comment type="subunit">
    <text evidence="1">Homodimer.</text>
</comment>
<comment type="subcellular location">
    <subcellularLocation>
        <location evidence="1">Cytoplasm</location>
    </subcellularLocation>
</comment>
<comment type="similarity">
    <text evidence="1">Belongs to the class-V pyridoxal-phosphate-dependent aminotransferase family. SerC subfamily.</text>
</comment>
<accession>P55900</accession>
<proteinExistence type="evidence at protein level"/>
<organism>
    <name type="scientific">Salmonella typhimurium (strain LT2 / SGSC1412 / ATCC 700720)</name>
    <dbReference type="NCBI Taxonomy" id="99287"/>
    <lineage>
        <taxon>Bacteria</taxon>
        <taxon>Pseudomonadati</taxon>
        <taxon>Pseudomonadota</taxon>
        <taxon>Gammaproteobacteria</taxon>
        <taxon>Enterobacterales</taxon>
        <taxon>Enterobacteriaceae</taxon>
        <taxon>Salmonella</taxon>
    </lineage>
</organism>
<reference key="1">
    <citation type="submission" date="1997-01" db="EMBL/GenBank/DDBJ databases">
        <authorList>
            <person name="Mouslim C."/>
            <person name="Flores A."/>
            <person name="Cano D.A."/>
            <person name="Casadesus J."/>
        </authorList>
    </citation>
    <scope>NUCLEOTIDE SEQUENCE [GENOMIC DNA]</scope>
    <source>
        <strain>LT2</strain>
    </source>
</reference>
<reference key="2">
    <citation type="journal article" date="2001" name="Nature">
        <title>Complete genome sequence of Salmonella enterica serovar Typhimurium LT2.</title>
        <authorList>
            <person name="McClelland M."/>
            <person name="Sanderson K.E."/>
            <person name="Spieth J."/>
            <person name="Clifton S.W."/>
            <person name="Latreille P."/>
            <person name="Courtney L."/>
            <person name="Porwollik S."/>
            <person name="Ali J."/>
            <person name="Dante M."/>
            <person name="Du F."/>
            <person name="Hou S."/>
            <person name="Layman D."/>
            <person name="Leonard S."/>
            <person name="Nguyen C."/>
            <person name="Scott K."/>
            <person name="Holmes A."/>
            <person name="Grewal N."/>
            <person name="Mulvaney E."/>
            <person name="Ryan E."/>
            <person name="Sun H."/>
            <person name="Florea L."/>
            <person name="Miller W."/>
            <person name="Stoneking T."/>
            <person name="Nhan M."/>
            <person name="Waterston R."/>
            <person name="Wilson R.K."/>
        </authorList>
    </citation>
    <scope>NUCLEOTIDE SEQUENCE [LARGE SCALE GENOMIC DNA]</scope>
    <source>
        <strain>LT2 / SGSC1412 / ATCC 700720</strain>
    </source>
</reference>
<sequence length="362" mass="39832">MAQVFNFSSGPAMLPAEVLKLAQQELCDWHGLGTSVMEISHRGKEFIQVAEEAEQDFRDLLNIPSNYKVLFCHGGGRGQFAGVPLNLLGDKTTADYVDAGYWAASAIKEAKKYCAPQIIDAKITVDGKRAVKPMREWQLSDNAAYLHYCPNETIDGIAIDETPDFGPEVVVTADFSSTILSAPLDVSRYGVIYAGAQKNIGPAGLTLVIVREDLLGKAHESCPSILDYTVLNDNDSMFNTPPTFAWYLSGLVFKWLKAQGGVAAMHKINQQKAELLYGVIDNSDFYRNDVAQANRSRMNVPFQLADNTLDKVFLEESFAAGLHALKGHRVVGGMRASIYNAMPIEGVKALTDFMIDFERRHG</sequence>
<protein>
    <recommendedName>
        <fullName evidence="1">Phosphoserine aminotransferase</fullName>
        <ecNumber evidence="1">2.6.1.52</ecNumber>
    </recommendedName>
    <alternativeName>
        <fullName evidence="1">Phosphohydroxythreonine aminotransferase</fullName>
        <shortName evidence="1">PSAT</shortName>
    </alternativeName>
</protein>
<evidence type="ECO:0000255" key="1">
    <source>
        <dbReference type="HAMAP-Rule" id="MF_00160"/>
    </source>
</evidence>
<evidence type="ECO:0000305" key="2"/>
<evidence type="ECO:0007829" key="3">
    <source>
        <dbReference type="PDB" id="3QM2"/>
    </source>
</evidence>
<name>SERC_SALTY</name>